<feature type="chain" id="PRO_1000070094" description="Membrane protein insertase YidC">
    <location>
        <begin position="1"/>
        <end position="551"/>
    </location>
</feature>
<feature type="transmembrane region" description="Helical" evidence="1">
    <location>
        <begin position="3"/>
        <end position="23"/>
    </location>
</feature>
<feature type="transmembrane region" description="Helical" evidence="1">
    <location>
        <begin position="361"/>
        <end position="381"/>
    </location>
</feature>
<feature type="transmembrane region" description="Helical" evidence="1">
    <location>
        <begin position="431"/>
        <end position="451"/>
    </location>
</feature>
<feature type="transmembrane region" description="Helical" evidence="1">
    <location>
        <begin position="504"/>
        <end position="524"/>
    </location>
</feature>
<feature type="region of interest" description="Disordered" evidence="2">
    <location>
        <begin position="33"/>
        <end position="55"/>
    </location>
</feature>
<organism>
    <name type="scientific">Francisella tularensis subsp. holarctica (strain FTNF002-00 / FTA)</name>
    <dbReference type="NCBI Taxonomy" id="458234"/>
    <lineage>
        <taxon>Bacteria</taxon>
        <taxon>Pseudomonadati</taxon>
        <taxon>Pseudomonadota</taxon>
        <taxon>Gammaproteobacteria</taxon>
        <taxon>Thiotrichales</taxon>
        <taxon>Francisellaceae</taxon>
        <taxon>Francisella</taxon>
    </lineage>
</organism>
<evidence type="ECO:0000255" key="1">
    <source>
        <dbReference type="HAMAP-Rule" id="MF_01810"/>
    </source>
</evidence>
<evidence type="ECO:0000256" key="2">
    <source>
        <dbReference type="SAM" id="MobiDB-lite"/>
    </source>
</evidence>
<gene>
    <name evidence="1" type="primary">yidC</name>
    <name type="ordered locus">FTA_0192</name>
</gene>
<accession>A7N9L6</accession>
<proteinExistence type="inferred from homology"/>
<keyword id="KW-0997">Cell inner membrane</keyword>
<keyword id="KW-1003">Cell membrane</keyword>
<keyword id="KW-0143">Chaperone</keyword>
<keyword id="KW-0472">Membrane</keyword>
<keyword id="KW-0653">Protein transport</keyword>
<keyword id="KW-0812">Transmembrane</keyword>
<keyword id="KW-1133">Transmembrane helix</keyword>
<keyword id="KW-0813">Transport</keyword>
<comment type="function">
    <text evidence="1">Required for the insertion and/or proper folding and/or complex formation of integral membrane proteins into the membrane. Involved in integration of membrane proteins that insert both dependently and independently of the Sec translocase complex, as well as at least some lipoproteins. Aids folding of multispanning membrane proteins.</text>
</comment>
<comment type="subunit">
    <text evidence="1">Interacts with the Sec translocase complex via SecD. Specifically interacts with transmembrane segments of nascent integral membrane proteins during membrane integration.</text>
</comment>
<comment type="subcellular location">
    <subcellularLocation>
        <location evidence="1">Cell inner membrane</location>
        <topology evidence="1">Multi-pass membrane protein</topology>
    </subcellularLocation>
</comment>
<comment type="similarity">
    <text evidence="1">Belongs to the OXA1/ALB3/YidC family. Type 1 subfamily.</text>
</comment>
<reference key="1">
    <citation type="journal article" date="2009" name="PLoS ONE">
        <title>Complete genome sequence of Francisella tularensis subspecies holarctica FTNF002-00.</title>
        <authorList>
            <person name="Barabote R.D."/>
            <person name="Xie G."/>
            <person name="Brettin T.S."/>
            <person name="Hinrichs S.H."/>
            <person name="Fey P.D."/>
            <person name="Jay J.J."/>
            <person name="Engle J.L."/>
            <person name="Godbole S.D."/>
            <person name="Noronha J.M."/>
            <person name="Scheuermann R.H."/>
            <person name="Zhou L.W."/>
            <person name="Lion C."/>
            <person name="Dempsey M.P."/>
        </authorList>
    </citation>
    <scope>NUCLEOTIDE SEQUENCE [LARGE SCALE GENOMIC DNA]</scope>
    <source>
        <strain>FTNF002-00 / FTA</strain>
    </source>
</reference>
<protein>
    <recommendedName>
        <fullName evidence="1">Membrane protein insertase YidC</fullName>
    </recommendedName>
    <alternativeName>
        <fullName evidence="1">Foldase YidC</fullName>
    </alternativeName>
    <alternativeName>
        <fullName evidence="1">Membrane integrase YidC</fullName>
    </alternativeName>
    <alternativeName>
        <fullName evidence="1">Membrane protein YidC</fullName>
    </alternativeName>
</protein>
<dbReference type="EMBL" id="CP000803">
    <property type="protein sequence ID" value="ABU60669.1"/>
    <property type="molecule type" value="Genomic_DNA"/>
</dbReference>
<dbReference type="RefSeq" id="WP_003014183.1">
    <property type="nucleotide sequence ID" value="NC_009749.1"/>
</dbReference>
<dbReference type="SMR" id="A7N9L6"/>
<dbReference type="KEGG" id="fta:FTA_0192"/>
<dbReference type="HOGENOM" id="CLU_016535_3_0_6"/>
<dbReference type="GO" id="GO:0005886">
    <property type="term" value="C:plasma membrane"/>
    <property type="evidence" value="ECO:0007669"/>
    <property type="project" value="UniProtKB-SubCell"/>
</dbReference>
<dbReference type="GO" id="GO:0032977">
    <property type="term" value="F:membrane insertase activity"/>
    <property type="evidence" value="ECO:0007669"/>
    <property type="project" value="InterPro"/>
</dbReference>
<dbReference type="GO" id="GO:0051205">
    <property type="term" value="P:protein insertion into membrane"/>
    <property type="evidence" value="ECO:0007669"/>
    <property type="project" value="TreeGrafter"/>
</dbReference>
<dbReference type="GO" id="GO:0015031">
    <property type="term" value="P:protein transport"/>
    <property type="evidence" value="ECO:0007669"/>
    <property type="project" value="UniProtKB-KW"/>
</dbReference>
<dbReference type="CDD" id="cd20070">
    <property type="entry name" value="5TM_YidC_Alb3"/>
    <property type="match status" value="1"/>
</dbReference>
<dbReference type="CDD" id="cd19961">
    <property type="entry name" value="EcYidC-like_peri"/>
    <property type="match status" value="1"/>
</dbReference>
<dbReference type="Gene3D" id="2.70.98.90">
    <property type="match status" value="1"/>
</dbReference>
<dbReference type="HAMAP" id="MF_01810">
    <property type="entry name" value="YidC_type1"/>
    <property type="match status" value="1"/>
</dbReference>
<dbReference type="InterPro" id="IPR019998">
    <property type="entry name" value="Membr_insert_YidC"/>
</dbReference>
<dbReference type="InterPro" id="IPR028053">
    <property type="entry name" value="Membr_insert_YidC_N"/>
</dbReference>
<dbReference type="InterPro" id="IPR001708">
    <property type="entry name" value="YidC/ALB3/OXA1/COX18"/>
</dbReference>
<dbReference type="InterPro" id="IPR028055">
    <property type="entry name" value="YidC/Oxa/ALB_C"/>
</dbReference>
<dbReference type="InterPro" id="IPR047196">
    <property type="entry name" value="YidC_ALB_C"/>
</dbReference>
<dbReference type="InterPro" id="IPR038221">
    <property type="entry name" value="YidC_periplasmic_sf"/>
</dbReference>
<dbReference type="NCBIfam" id="NF002352">
    <property type="entry name" value="PRK01318.1-3"/>
    <property type="match status" value="1"/>
</dbReference>
<dbReference type="NCBIfam" id="TIGR03593">
    <property type="entry name" value="yidC_nterm"/>
    <property type="match status" value="1"/>
</dbReference>
<dbReference type="NCBIfam" id="TIGR03592">
    <property type="entry name" value="yidC_oxa1_cterm"/>
    <property type="match status" value="1"/>
</dbReference>
<dbReference type="PANTHER" id="PTHR12428:SF65">
    <property type="entry name" value="CYTOCHROME C OXIDASE ASSEMBLY PROTEIN COX18, MITOCHONDRIAL"/>
    <property type="match status" value="1"/>
</dbReference>
<dbReference type="PANTHER" id="PTHR12428">
    <property type="entry name" value="OXA1"/>
    <property type="match status" value="1"/>
</dbReference>
<dbReference type="Pfam" id="PF02096">
    <property type="entry name" value="60KD_IMP"/>
    <property type="match status" value="1"/>
</dbReference>
<dbReference type="Pfam" id="PF14849">
    <property type="entry name" value="YidC_periplas"/>
    <property type="match status" value="1"/>
</dbReference>
<dbReference type="PRINTS" id="PR00701">
    <property type="entry name" value="60KDINNERMP"/>
</dbReference>
<dbReference type="PRINTS" id="PR01900">
    <property type="entry name" value="YIDCPROTEIN"/>
</dbReference>
<sequence length="551" mass="61952">MKANHIRILLLVTIAIMFISLMGKWEQTFPADNTKQQTSATQNNSHYDNADSSTNTDVTITDAKSSLAKETNFSKYDNAKSITINTVVFKDVKVSLLDGAIISASLKDYSISLDDKTPMSLLTDKSGSEYIAKSTIVVNKQPISVNFEDQGIKIENSKQILTLTGSADGLQITRTYTFDDTKYNISVSQNIKNTTSAPVNVIVDDSFARDFDPAGDSFSLLNAHSYTFTGVAYSTAKDSFRKESFKDISKTNGQPTVINSDGQGWVAFLQHYFVSAWIPQSTNAKIYYKNLNGDVFEAGAFTGATIAPNQSENISSILYTGPIIKANLVDLAPNLEKTLDYGMLSFFSEIIFWVMNHIHSLVGNWGLAIILVTCLIKLIFYPLSAKSYRSMAKMRMLQPRIKRLQETYKDDRQALGKKMMELYKEEKVNPLSGCLPMLIQIPIFISLYWVLLESVELRQAPFIFWIHDLSMKDPYFVLPVLMGLSMFLQQKLSPAPADPMQAKVMMFLPVIFTFLFASFPSGLVLYWLTNNLISISQQWIITRHYQATHKK</sequence>
<name>YIDC_FRATF</name>